<gene>
    <name type="primary">hupA</name>
</gene>
<protein>
    <recommendedName>
        <fullName>DNA-binding protein HU-alpha</fullName>
    </recommendedName>
</protein>
<feature type="chain" id="PRO_0000104905" description="DNA-binding protein HU-alpha">
    <location>
        <begin position="1"/>
        <end position="90"/>
    </location>
</feature>
<dbReference type="EMBL" id="AF146598">
    <property type="protein sequence ID" value="AAF45030.1"/>
    <property type="status" value="ALT_INIT"/>
    <property type="molecule type" value="Genomic_DNA"/>
</dbReference>
<dbReference type="RefSeq" id="WP_005305063.1">
    <property type="nucleotide sequence ID" value="NZ_WTZJ01000006.1"/>
</dbReference>
<dbReference type="SMR" id="Q9LA96"/>
<dbReference type="GeneID" id="97859256"/>
<dbReference type="eggNOG" id="COG0776">
    <property type="taxonomic scope" value="Bacteria"/>
</dbReference>
<dbReference type="GO" id="GO:0005829">
    <property type="term" value="C:cytosol"/>
    <property type="evidence" value="ECO:0007669"/>
    <property type="project" value="TreeGrafter"/>
</dbReference>
<dbReference type="GO" id="GO:0003677">
    <property type="term" value="F:DNA binding"/>
    <property type="evidence" value="ECO:0007669"/>
    <property type="project" value="UniProtKB-KW"/>
</dbReference>
<dbReference type="GO" id="GO:0030527">
    <property type="term" value="F:structural constituent of chromatin"/>
    <property type="evidence" value="ECO:0007669"/>
    <property type="project" value="InterPro"/>
</dbReference>
<dbReference type="GO" id="GO:0030261">
    <property type="term" value="P:chromosome condensation"/>
    <property type="evidence" value="ECO:0007669"/>
    <property type="project" value="UniProtKB-KW"/>
</dbReference>
<dbReference type="CDD" id="cd13831">
    <property type="entry name" value="HU"/>
    <property type="match status" value="1"/>
</dbReference>
<dbReference type="FunFam" id="4.10.520.10:FF:000001">
    <property type="entry name" value="DNA-binding protein HU"/>
    <property type="match status" value="1"/>
</dbReference>
<dbReference type="Gene3D" id="4.10.520.10">
    <property type="entry name" value="IHF-like DNA-binding proteins"/>
    <property type="match status" value="1"/>
</dbReference>
<dbReference type="InterPro" id="IPR000119">
    <property type="entry name" value="Hist_DNA-bd"/>
</dbReference>
<dbReference type="InterPro" id="IPR020816">
    <property type="entry name" value="Histone-like_DNA-bd_CS"/>
</dbReference>
<dbReference type="InterPro" id="IPR010992">
    <property type="entry name" value="IHF-like_DNA-bd_dom_sf"/>
</dbReference>
<dbReference type="NCBIfam" id="NF008023">
    <property type="entry name" value="PRK10753.1"/>
    <property type="match status" value="1"/>
</dbReference>
<dbReference type="PANTHER" id="PTHR33175">
    <property type="entry name" value="DNA-BINDING PROTEIN HU"/>
    <property type="match status" value="1"/>
</dbReference>
<dbReference type="PANTHER" id="PTHR33175:SF12">
    <property type="entry name" value="DNA-BINDING PROTEIN HU-ALPHA"/>
    <property type="match status" value="1"/>
</dbReference>
<dbReference type="Pfam" id="PF00216">
    <property type="entry name" value="Bac_DNA_binding"/>
    <property type="match status" value="1"/>
</dbReference>
<dbReference type="PRINTS" id="PR01727">
    <property type="entry name" value="DNABINDINGHU"/>
</dbReference>
<dbReference type="SMART" id="SM00411">
    <property type="entry name" value="BHL"/>
    <property type="match status" value="1"/>
</dbReference>
<dbReference type="SUPFAM" id="SSF47729">
    <property type="entry name" value="IHF-like DNA-binding proteins"/>
    <property type="match status" value="1"/>
</dbReference>
<dbReference type="PROSITE" id="PS00045">
    <property type="entry name" value="HISTONE_LIKE"/>
    <property type="match status" value="1"/>
</dbReference>
<accession>Q9LA96</accession>
<organism>
    <name type="scientific">Aeromonas hydrophila</name>
    <dbReference type="NCBI Taxonomy" id="644"/>
    <lineage>
        <taxon>Bacteria</taxon>
        <taxon>Pseudomonadati</taxon>
        <taxon>Pseudomonadota</taxon>
        <taxon>Gammaproteobacteria</taxon>
        <taxon>Aeromonadales</taxon>
        <taxon>Aeromonadaceae</taxon>
        <taxon>Aeromonas</taxon>
    </lineage>
</organism>
<comment type="function">
    <text evidence="1">Histone-like DNA-binding protein which is capable of wrapping DNA to stabilize it, and thus to prevent its denaturation under extreme environmental conditions.</text>
</comment>
<comment type="subunit">
    <text evidence="1">Heterodimer of an alpha and a beta chain.</text>
</comment>
<comment type="similarity">
    <text evidence="2">Belongs to the bacterial histone-like protein family.</text>
</comment>
<comment type="sequence caution" evidence="2">
    <conflict type="erroneous initiation">
        <sequence resource="EMBL-CDS" id="AAF45030"/>
    </conflict>
</comment>
<reference key="1">
    <citation type="journal article" date="2000" name="Microbiology">
        <title>Molecular analysis of genetic differences between virulent and avirulent strains of Aeromonas hydrophila isolated from diseased fish.</title>
        <authorList>
            <person name="Zhang Y.L."/>
            <person name="Ong C.T."/>
            <person name="Leung K.Y."/>
        </authorList>
    </citation>
    <scope>NUCLEOTIDE SEQUENCE [GENOMIC DNA]</scope>
    <source>
        <strain>PPD134/91</strain>
    </source>
</reference>
<evidence type="ECO:0000250" key="1"/>
<evidence type="ECO:0000305" key="2"/>
<keyword id="KW-0226">DNA condensation</keyword>
<keyword id="KW-0238">DNA-binding</keyword>
<name>DBHA_AERHY</name>
<sequence>MNKAQLVDAIAAKADLSKAQAKVALEEIINGITQSLKEGDAVQLVGFGTFKVNHRAGRTGRNPQTGKEIQIAAANVPSFVAGKALKDAVK</sequence>
<proteinExistence type="inferred from homology"/>